<protein>
    <recommendedName>
        <fullName>Succinoglycan biosynthesis protein ExoI</fullName>
    </recommendedName>
</protein>
<geneLocation type="plasmid">
    <name>pSymB</name>
    <name>megaplasmid 2</name>
</geneLocation>
<sequence>MTRIKSAVAAGGRRAPHSARLGSASTRTIGAVLAALLMTHDAGAAEPIIGQASVIDGDTIEIAGERVQLNSVDAPEEWQVCLDERGADYRCGKESASALDAFLSASRPTRCEFAGRDRYGRFVGTCFRADGKDVNRWLIESGNAVDRDTDNKGLYASAQQTAKSNGAGIWRAQPEHACAARVGRVNRKPSC</sequence>
<gene>
    <name type="primary">exoI</name>
    <name type="ordered locus">RB1076</name>
    <name type="ORF">SMb20951</name>
</gene>
<evidence type="ECO:0000256" key="1">
    <source>
        <dbReference type="SAM" id="MobiDB-lite"/>
    </source>
</evidence>
<accession>Q52928</accession>
<proteinExistence type="predicted"/>
<keyword id="KW-0270">Exopolysaccharide synthesis</keyword>
<keyword id="KW-0614">Plasmid</keyword>
<keyword id="KW-1185">Reference proteome</keyword>
<feature type="chain" id="PRO_0000215281" description="Succinoglycan biosynthesis protein ExoI">
    <location>
        <begin position="1"/>
        <end position="191"/>
    </location>
</feature>
<feature type="region of interest" description="Disordered" evidence="1">
    <location>
        <begin position="1"/>
        <end position="21"/>
    </location>
</feature>
<dbReference type="EMBL" id="Z22646">
    <property type="protein sequence ID" value="CAA80363.1"/>
    <property type="molecule type" value="Genomic_DNA"/>
</dbReference>
<dbReference type="EMBL" id="AL591985">
    <property type="protein sequence ID" value="CAC49476.1"/>
    <property type="molecule type" value="Genomic_DNA"/>
</dbReference>
<dbReference type="PIR" id="D95976">
    <property type="entry name" value="D95976"/>
</dbReference>
<dbReference type="PIR" id="S40177">
    <property type="entry name" value="S40177"/>
</dbReference>
<dbReference type="RefSeq" id="NP_437616.1">
    <property type="nucleotide sequence ID" value="NC_003078.1"/>
</dbReference>
<dbReference type="RefSeq" id="WP_010975913.1">
    <property type="nucleotide sequence ID" value="NC_003078.1"/>
</dbReference>
<dbReference type="SMR" id="Q52928"/>
<dbReference type="EnsemblBacteria" id="CAC49476">
    <property type="protein sequence ID" value="CAC49476"/>
    <property type="gene ID" value="SM_b20951"/>
</dbReference>
<dbReference type="KEGG" id="sme:SM_b20951"/>
<dbReference type="PATRIC" id="fig|266834.11.peg.6004"/>
<dbReference type="eggNOG" id="COG1525">
    <property type="taxonomic scope" value="Bacteria"/>
</dbReference>
<dbReference type="HOGENOM" id="CLU_046484_6_3_5"/>
<dbReference type="OrthoDB" id="9805504at2"/>
<dbReference type="UniPathway" id="UPA00631"/>
<dbReference type="Proteomes" id="UP000001976">
    <property type="component" value="Plasmid pSymB"/>
</dbReference>
<dbReference type="GO" id="GO:0000271">
    <property type="term" value="P:polysaccharide biosynthetic process"/>
    <property type="evidence" value="ECO:0007669"/>
    <property type="project" value="UniProtKB-KW"/>
</dbReference>
<dbReference type="CDD" id="cd00175">
    <property type="entry name" value="SNc"/>
    <property type="match status" value="1"/>
</dbReference>
<dbReference type="Gene3D" id="2.40.50.90">
    <property type="match status" value="1"/>
</dbReference>
<dbReference type="InterPro" id="IPR035437">
    <property type="entry name" value="SNase_OB-fold_sf"/>
</dbReference>
<dbReference type="InterPro" id="IPR016071">
    <property type="entry name" value="Staphylococal_nuclease_OB-fold"/>
</dbReference>
<dbReference type="PANTHER" id="PTHR12302:SF26">
    <property type="entry name" value="BLR1266 PROTEIN"/>
    <property type="match status" value="1"/>
</dbReference>
<dbReference type="PANTHER" id="PTHR12302">
    <property type="entry name" value="EBNA2 BINDING PROTEIN P100"/>
    <property type="match status" value="1"/>
</dbReference>
<dbReference type="Pfam" id="PF00565">
    <property type="entry name" value="SNase"/>
    <property type="match status" value="1"/>
</dbReference>
<dbReference type="SMART" id="SM00318">
    <property type="entry name" value="SNc"/>
    <property type="match status" value="1"/>
</dbReference>
<dbReference type="SUPFAM" id="SSF50199">
    <property type="entry name" value="Staphylococcal nuclease"/>
    <property type="match status" value="1"/>
</dbReference>
<dbReference type="PROSITE" id="PS50830">
    <property type="entry name" value="TNASE_3"/>
    <property type="match status" value="1"/>
</dbReference>
<reference key="1">
    <citation type="journal article" date="1993" name="Mol. Plant Microbe Interact.">
        <title>Analysis of the Rhizobium meliloti genes exoU, exoV, exoW, exoT, and exoI involved in exopolysaccharide biosynthesis and nodule invasion: exoU and exoW probably encode glucosyltransferases.</title>
        <authorList>
            <person name="Becker A."/>
            <person name="Kleickmann A."/>
            <person name="Kuester H."/>
            <person name="Keller M."/>
            <person name="Arnold W."/>
            <person name="Puehler A."/>
        </authorList>
    </citation>
    <scope>NUCLEOTIDE SEQUENCE [GENOMIC DNA]</scope>
    <source>
        <strain>RCR2011 / SU47</strain>
    </source>
</reference>
<reference key="2">
    <citation type="journal article" date="2001" name="Proc. Natl. Acad. Sci. U.S.A.">
        <title>The complete sequence of the 1,683-kb pSymB megaplasmid from the N2-fixing endosymbiont Sinorhizobium meliloti.</title>
        <authorList>
            <person name="Finan T.M."/>
            <person name="Weidner S."/>
            <person name="Wong K."/>
            <person name="Buhrmester J."/>
            <person name="Chain P."/>
            <person name="Vorhoelter F.J."/>
            <person name="Hernandez-Lucas I."/>
            <person name="Becker A."/>
            <person name="Cowie A."/>
            <person name="Gouzy J."/>
            <person name="Golding B."/>
            <person name="Puehler A."/>
        </authorList>
    </citation>
    <scope>NUCLEOTIDE SEQUENCE [LARGE SCALE GENOMIC DNA]</scope>
    <source>
        <strain>1021</strain>
    </source>
</reference>
<reference key="3">
    <citation type="journal article" date="2001" name="Science">
        <title>The composite genome of the legume symbiont Sinorhizobium meliloti.</title>
        <authorList>
            <person name="Galibert F."/>
            <person name="Finan T.M."/>
            <person name="Long S.R."/>
            <person name="Puehler A."/>
            <person name="Abola P."/>
            <person name="Ampe F."/>
            <person name="Barloy-Hubler F."/>
            <person name="Barnett M.J."/>
            <person name="Becker A."/>
            <person name="Boistard P."/>
            <person name="Bothe G."/>
            <person name="Boutry M."/>
            <person name="Bowser L."/>
            <person name="Buhrmester J."/>
            <person name="Cadieu E."/>
            <person name="Capela D."/>
            <person name="Chain P."/>
            <person name="Cowie A."/>
            <person name="Davis R.W."/>
            <person name="Dreano S."/>
            <person name="Federspiel N.A."/>
            <person name="Fisher R.F."/>
            <person name="Gloux S."/>
            <person name="Godrie T."/>
            <person name="Goffeau A."/>
            <person name="Golding B."/>
            <person name="Gouzy J."/>
            <person name="Gurjal M."/>
            <person name="Hernandez-Lucas I."/>
            <person name="Hong A."/>
            <person name="Huizar L."/>
            <person name="Hyman R.W."/>
            <person name="Jones T."/>
            <person name="Kahn D."/>
            <person name="Kahn M.L."/>
            <person name="Kalman S."/>
            <person name="Keating D.H."/>
            <person name="Kiss E."/>
            <person name="Komp C."/>
            <person name="Lelaure V."/>
            <person name="Masuy D."/>
            <person name="Palm C."/>
            <person name="Peck M.C."/>
            <person name="Pohl T.M."/>
            <person name="Portetelle D."/>
            <person name="Purnelle B."/>
            <person name="Ramsperger U."/>
            <person name="Surzycki R."/>
            <person name="Thebault P."/>
            <person name="Vandenbol M."/>
            <person name="Vorhoelter F.J."/>
            <person name="Weidner S."/>
            <person name="Wells D.H."/>
            <person name="Wong K."/>
            <person name="Yeh K.-C."/>
            <person name="Batut J."/>
        </authorList>
    </citation>
    <scope>NUCLEOTIDE SEQUENCE [LARGE SCALE GENOMIC DNA]</scope>
    <source>
        <strain>1021</strain>
    </source>
</reference>
<comment type="pathway">
    <text>Glycan metabolism; exopolysaccharide biosynthesis.</text>
</comment>
<organism>
    <name type="scientific">Rhizobium meliloti (strain 1021)</name>
    <name type="common">Ensifer meliloti</name>
    <name type="synonym">Sinorhizobium meliloti</name>
    <dbReference type="NCBI Taxonomy" id="266834"/>
    <lineage>
        <taxon>Bacteria</taxon>
        <taxon>Pseudomonadati</taxon>
        <taxon>Pseudomonadota</taxon>
        <taxon>Alphaproteobacteria</taxon>
        <taxon>Hyphomicrobiales</taxon>
        <taxon>Rhizobiaceae</taxon>
        <taxon>Sinorhizobium/Ensifer group</taxon>
        <taxon>Sinorhizobium</taxon>
    </lineage>
</organism>
<name>EXOI_RHIME</name>